<reference key="1">
    <citation type="submission" date="2005-08" db="EMBL/GenBank/DDBJ databases">
        <title>Complete sequence of Chlorobium chlorochromatii CaD3.</title>
        <authorList>
            <consortium name="US DOE Joint Genome Institute"/>
            <person name="Copeland A."/>
            <person name="Lucas S."/>
            <person name="Lapidus A."/>
            <person name="Barry K."/>
            <person name="Detter J.C."/>
            <person name="Glavina T."/>
            <person name="Hammon N."/>
            <person name="Israni S."/>
            <person name="Pitluck S."/>
            <person name="Bryant D."/>
            <person name="Schmutz J."/>
            <person name="Larimer F."/>
            <person name="Land M."/>
            <person name="Kyrpides N."/>
            <person name="Ivanova N."/>
            <person name="Richardson P."/>
        </authorList>
    </citation>
    <scope>NUCLEOTIDE SEQUENCE [LARGE SCALE GENOMIC DNA]</scope>
    <source>
        <strain>CaD3</strain>
    </source>
</reference>
<gene>
    <name evidence="1" type="primary">aroC</name>
    <name type="ordered locus">Cag_1519</name>
</gene>
<proteinExistence type="inferred from homology"/>
<comment type="function">
    <text evidence="1">Catalyzes the anti-1,4-elimination of the C-3 phosphate and the C-6 proR hydrogen from 5-enolpyruvylshikimate-3-phosphate (EPSP) to yield chorismate, which is the branch point compound that serves as the starting substrate for the three terminal pathways of aromatic amino acid biosynthesis. This reaction introduces a second double bond into the aromatic ring system.</text>
</comment>
<comment type="catalytic activity">
    <reaction evidence="1">
        <text>5-O-(1-carboxyvinyl)-3-phosphoshikimate = chorismate + phosphate</text>
        <dbReference type="Rhea" id="RHEA:21020"/>
        <dbReference type="ChEBI" id="CHEBI:29748"/>
        <dbReference type="ChEBI" id="CHEBI:43474"/>
        <dbReference type="ChEBI" id="CHEBI:57701"/>
        <dbReference type="EC" id="4.2.3.5"/>
    </reaction>
</comment>
<comment type="cofactor">
    <cofactor evidence="1">
        <name>FMNH2</name>
        <dbReference type="ChEBI" id="CHEBI:57618"/>
    </cofactor>
    <text evidence="1">Reduced FMN (FMNH(2)).</text>
</comment>
<comment type="pathway">
    <text evidence="1">Metabolic intermediate biosynthesis; chorismate biosynthesis; chorismate from D-erythrose 4-phosphate and phosphoenolpyruvate: step 7/7.</text>
</comment>
<comment type="subunit">
    <text evidence="1">Homotetramer.</text>
</comment>
<comment type="similarity">
    <text evidence="1">Belongs to the chorismate synthase family.</text>
</comment>
<name>AROC_CHLCH</name>
<evidence type="ECO:0000255" key="1">
    <source>
        <dbReference type="HAMAP-Rule" id="MF_00300"/>
    </source>
</evidence>
<protein>
    <recommendedName>
        <fullName evidence="1">Chorismate synthase</fullName>
        <shortName evidence="1">CS</shortName>
        <ecNumber evidence="1">4.2.3.5</ecNumber>
    </recommendedName>
    <alternativeName>
        <fullName evidence="1">5-enolpyruvylshikimate-3-phosphate phospholyase</fullName>
    </alternativeName>
</protein>
<feature type="chain" id="PRO_0000256283" description="Chorismate synthase">
    <location>
        <begin position="1"/>
        <end position="399"/>
    </location>
</feature>
<feature type="binding site" evidence="1">
    <location>
        <position position="40"/>
    </location>
    <ligand>
        <name>NADP(+)</name>
        <dbReference type="ChEBI" id="CHEBI:58349"/>
    </ligand>
</feature>
<feature type="binding site" evidence="1">
    <location>
        <position position="46"/>
    </location>
    <ligand>
        <name>NADP(+)</name>
        <dbReference type="ChEBI" id="CHEBI:58349"/>
    </ligand>
</feature>
<feature type="binding site" evidence="1">
    <location>
        <begin position="129"/>
        <end position="131"/>
    </location>
    <ligand>
        <name>FMN</name>
        <dbReference type="ChEBI" id="CHEBI:58210"/>
    </ligand>
</feature>
<feature type="binding site" evidence="1">
    <location>
        <begin position="257"/>
        <end position="258"/>
    </location>
    <ligand>
        <name>FMN</name>
        <dbReference type="ChEBI" id="CHEBI:58210"/>
    </ligand>
</feature>
<feature type="binding site" evidence="1">
    <location>
        <position position="302"/>
    </location>
    <ligand>
        <name>FMN</name>
        <dbReference type="ChEBI" id="CHEBI:58210"/>
    </ligand>
</feature>
<feature type="binding site" evidence="1">
    <location>
        <begin position="317"/>
        <end position="321"/>
    </location>
    <ligand>
        <name>FMN</name>
        <dbReference type="ChEBI" id="CHEBI:58210"/>
    </ligand>
</feature>
<feature type="binding site" evidence="1">
    <location>
        <position position="343"/>
    </location>
    <ligand>
        <name>FMN</name>
        <dbReference type="ChEBI" id="CHEBI:58210"/>
    </ligand>
</feature>
<keyword id="KW-0028">Amino-acid biosynthesis</keyword>
<keyword id="KW-0057">Aromatic amino acid biosynthesis</keyword>
<keyword id="KW-0274">FAD</keyword>
<keyword id="KW-0285">Flavoprotein</keyword>
<keyword id="KW-0288">FMN</keyword>
<keyword id="KW-0456">Lyase</keyword>
<keyword id="KW-0521">NADP</keyword>
<dbReference type="EC" id="4.2.3.5" evidence="1"/>
<dbReference type="EMBL" id="CP000108">
    <property type="protein sequence ID" value="ABB28774.1"/>
    <property type="molecule type" value="Genomic_DNA"/>
</dbReference>
<dbReference type="SMR" id="Q3AQF1"/>
<dbReference type="STRING" id="340177.Cag_1519"/>
<dbReference type="KEGG" id="cch:Cag_1519"/>
<dbReference type="eggNOG" id="COG0082">
    <property type="taxonomic scope" value="Bacteria"/>
</dbReference>
<dbReference type="HOGENOM" id="CLU_034547_2_0_10"/>
<dbReference type="OrthoDB" id="9771806at2"/>
<dbReference type="UniPathway" id="UPA00053">
    <property type="reaction ID" value="UER00090"/>
</dbReference>
<dbReference type="GO" id="GO:0005829">
    <property type="term" value="C:cytosol"/>
    <property type="evidence" value="ECO:0007669"/>
    <property type="project" value="TreeGrafter"/>
</dbReference>
<dbReference type="GO" id="GO:0004107">
    <property type="term" value="F:chorismate synthase activity"/>
    <property type="evidence" value="ECO:0007669"/>
    <property type="project" value="UniProtKB-UniRule"/>
</dbReference>
<dbReference type="GO" id="GO:0010181">
    <property type="term" value="F:FMN binding"/>
    <property type="evidence" value="ECO:0007669"/>
    <property type="project" value="TreeGrafter"/>
</dbReference>
<dbReference type="GO" id="GO:0008652">
    <property type="term" value="P:amino acid biosynthetic process"/>
    <property type="evidence" value="ECO:0007669"/>
    <property type="project" value="UniProtKB-KW"/>
</dbReference>
<dbReference type="GO" id="GO:0009073">
    <property type="term" value="P:aromatic amino acid family biosynthetic process"/>
    <property type="evidence" value="ECO:0007669"/>
    <property type="project" value="UniProtKB-KW"/>
</dbReference>
<dbReference type="GO" id="GO:0009423">
    <property type="term" value="P:chorismate biosynthetic process"/>
    <property type="evidence" value="ECO:0007669"/>
    <property type="project" value="UniProtKB-UniRule"/>
</dbReference>
<dbReference type="CDD" id="cd07304">
    <property type="entry name" value="Chorismate_synthase"/>
    <property type="match status" value="1"/>
</dbReference>
<dbReference type="FunFam" id="3.60.150.10:FF:000002">
    <property type="entry name" value="Chorismate synthase"/>
    <property type="match status" value="1"/>
</dbReference>
<dbReference type="Gene3D" id="3.60.150.10">
    <property type="entry name" value="Chorismate synthase AroC"/>
    <property type="match status" value="1"/>
</dbReference>
<dbReference type="HAMAP" id="MF_00300">
    <property type="entry name" value="Chorismate_synth"/>
    <property type="match status" value="1"/>
</dbReference>
<dbReference type="InterPro" id="IPR000453">
    <property type="entry name" value="Chorismate_synth"/>
</dbReference>
<dbReference type="InterPro" id="IPR035904">
    <property type="entry name" value="Chorismate_synth_AroC_sf"/>
</dbReference>
<dbReference type="InterPro" id="IPR020541">
    <property type="entry name" value="Chorismate_synthase_CS"/>
</dbReference>
<dbReference type="NCBIfam" id="TIGR00033">
    <property type="entry name" value="aroC"/>
    <property type="match status" value="1"/>
</dbReference>
<dbReference type="NCBIfam" id="NF003793">
    <property type="entry name" value="PRK05382.1"/>
    <property type="match status" value="1"/>
</dbReference>
<dbReference type="PANTHER" id="PTHR21085">
    <property type="entry name" value="CHORISMATE SYNTHASE"/>
    <property type="match status" value="1"/>
</dbReference>
<dbReference type="PANTHER" id="PTHR21085:SF0">
    <property type="entry name" value="CHORISMATE SYNTHASE"/>
    <property type="match status" value="1"/>
</dbReference>
<dbReference type="Pfam" id="PF01264">
    <property type="entry name" value="Chorismate_synt"/>
    <property type="match status" value="1"/>
</dbReference>
<dbReference type="PIRSF" id="PIRSF001456">
    <property type="entry name" value="Chorismate_synth"/>
    <property type="match status" value="1"/>
</dbReference>
<dbReference type="SUPFAM" id="SSF103263">
    <property type="entry name" value="Chorismate synthase, AroC"/>
    <property type="match status" value="1"/>
</dbReference>
<dbReference type="PROSITE" id="PS00787">
    <property type="entry name" value="CHORISMATE_SYNTHASE_1"/>
    <property type="match status" value="1"/>
</dbReference>
<sequence length="399" mass="42284">MIQYVTAGESHGPALSAIVDGMPAGVPLTDEAINHQLARRQQGYGRGGRMKIETDKAEVLSGIRFGKTIGSPIAMVIRNRDWQNWTTTMAQFEQPQEAIPAITVPRPGHADLAGCIKYGFEDIRPVIERSSARETAARVAAGACAKLFLKALGIEIGSIVTAIGSAKEEMPQQELAAMLAHGAEAVATQADQSPVRMLSKSAETAAIAAIDEAKANGDTVGGIVDVFITGVPLGFGSYVQHNRRLDADLAAALLSIQAIKGVEIGTAFDNACKYGSQVHDEFIFSESGELTRPTNRAGGIEGSMSSGQVIHLRAAMKPISSLISPLQSFDIASMEPIPSRFERSDTCAVPAAGVVAEAVVAPVIANALLAKLGGDHFSEIHERLEAYRAYLANRLQRKS</sequence>
<organism>
    <name type="scientific">Chlorobium chlorochromatii (strain CaD3)</name>
    <dbReference type="NCBI Taxonomy" id="340177"/>
    <lineage>
        <taxon>Bacteria</taxon>
        <taxon>Pseudomonadati</taxon>
        <taxon>Chlorobiota</taxon>
        <taxon>Chlorobiia</taxon>
        <taxon>Chlorobiales</taxon>
        <taxon>Chlorobiaceae</taxon>
        <taxon>Chlorobium/Pelodictyon group</taxon>
        <taxon>Chlorobium</taxon>
    </lineage>
</organism>
<accession>Q3AQF1</accession>